<protein>
    <recommendedName>
        <fullName>Probable V-type proton ATPase subunit G</fullName>
        <shortName>V-ATPase subunit G</shortName>
    </recommendedName>
    <alternativeName>
        <fullName>Vacuolar proton pump subunit G</fullName>
    </alternativeName>
</protein>
<organism>
    <name type="scientific">Caenorhabditis elegans</name>
    <dbReference type="NCBI Taxonomy" id="6239"/>
    <lineage>
        <taxon>Eukaryota</taxon>
        <taxon>Metazoa</taxon>
        <taxon>Ecdysozoa</taxon>
        <taxon>Nematoda</taxon>
        <taxon>Chromadorea</taxon>
        <taxon>Rhabditida</taxon>
        <taxon>Rhabditina</taxon>
        <taxon>Rhabditomorpha</taxon>
        <taxon>Rhabditoidea</taxon>
        <taxon>Rhabditidae</taxon>
        <taxon>Peloderinae</taxon>
        <taxon>Caenorhabditis</taxon>
    </lineage>
</organism>
<comment type="function">
    <text evidence="1 2">Subunit of the V1 complex of vacuolar(H+)-ATPase (V-ATPase), a multisubunit enzyme composed of a peripheral complex (V1) that hydrolyzes ATP and a membrane integral complex (V0) that translocates protons (By similarity). V-ATPase is responsible for acidifying and maintaining the pH of intracellular compartments and in some cell types, is targeted to the plasma membrane, where it is responsible for acidifying the extracellular environment (PubMed:16005300). In neurons, required for necrotic cell death by promoting intracellular acidification (PubMed:16005300).</text>
</comment>
<comment type="subunit">
    <text evidence="1 3">V-ATPase is a heteromultimeric enzyme made up of two complexes: the ATP-hydrolytic V1 complex and the proton translocation V0 complex (By similarity). The V1 complex consists of three catalytic AB heterodimers that form a heterohexamer, three peripheral stalks each consisting of EG heterodimers, one central rotor including subunits D and F, and the regulatory subunits C and H (By similarity). The proton translocation complex V0 consists of the proton transport subunit a, a ring of proteolipid subunits c9c'', rotary subunit d, subunits e and f, and the accessory subunits vah-19/Ac45 and vah-20/PRR (By similarity). Interacts with ced-1 (PubMed:35929733).</text>
</comment>
<comment type="disruption phenotype">
    <text evidence="2 3">Suppression of necrotic cell death (PubMed:16005300). RNAi-mediated knockdown results in increased germ cell corpse number due to delayed clearance of dying or dead cells, impaired phagosome maturation at a late stage and impaired acidification of phagosomes containing cell corpses (PubMed:35929733).</text>
</comment>
<comment type="similarity">
    <text evidence="4">Belongs to the V-ATPase G subunit family.</text>
</comment>
<reference key="1">
    <citation type="journal article" date="1998" name="Science">
        <title>Genome sequence of the nematode C. elegans: a platform for investigating biology.</title>
        <authorList>
            <consortium name="The C. elegans sequencing consortium"/>
        </authorList>
    </citation>
    <scope>NUCLEOTIDE SEQUENCE [LARGE SCALE GENOMIC DNA]</scope>
    <source>
        <strain>Bristol N2</strain>
    </source>
</reference>
<reference key="2">
    <citation type="journal article" date="2005" name="Curr. Biol.">
        <title>The vacuolar H+ -ATPase mediates intracellular acidification required for neurodegeneration in C. elegans.</title>
        <authorList>
            <person name="Syntichaki P."/>
            <person name="Samara C."/>
            <person name="Tavernarakis N."/>
        </authorList>
    </citation>
    <scope>FUNCTION</scope>
    <scope>DISRUPTION PHENOTYPE</scope>
</reference>
<reference evidence="4" key="3">
    <citation type="journal article" date="2022" name="Elife">
        <title>trim-21 promotes proteasomal degradation of CED-1 for apoptotic cell clearance in C. elegans.</title>
        <authorList>
            <person name="Yuan L."/>
            <person name="Li P."/>
            <person name="Jing H."/>
            <person name="Zheng Q."/>
            <person name="Xiao H."/>
        </authorList>
    </citation>
    <scope>INTERACTION WITH CED-1</scope>
    <scope>DISRUPTION PHENOTYPE</scope>
</reference>
<gene>
    <name evidence="5" type="primary">vha-10</name>
    <name evidence="5" type="ORF">F46F11.5</name>
</gene>
<dbReference type="EMBL" id="BX284601">
    <property type="protein sequence ID" value="CCD71327.1"/>
    <property type="molecule type" value="Genomic_DNA"/>
</dbReference>
<dbReference type="PIR" id="T25764">
    <property type="entry name" value="T25764"/>
</dbReference>
<dbReference type="RefSeq" id="NP_491641.1">
    <property type="nucleotide sequence ID" value="NM_059240.7"/>
</dbReference>
<dbReference type="SMR" id="P91303"/>
<dbReference type="BioGRID" id="37674">
    <property type="interactions" value="14"/>
</dbReference>
<dbReference type="FunCoup" id="P91303">
    <property type="interactions" value="1819"/>
</dbReference>
<dbReference type="IntAct" id="P91303">
    <property type="interactions" value="1"/>
</dbReference>
<dbReference type="STRING" id="6239.F46F11.5.2"/>
<dbReference type="TCDB" id="3.A.2.2.7">
    <property type="family name" value="the h+- or na+-translocating f-type, v-type and a-type atpase (f-atpase) superfamily"/>
</dbReference>
<dbReference type="iPTMnet" id="P91303"/>
<dbReference type="PaxDb" id="6239-F46F11.5"/>
<dbReference type="PeptideAtlas" id="P91303"/>
<dbReference type="EnsemblMetazoa" id="F46F11.5.1">
    <property type="protein sequence ID" value="F46F11.5.1"/>
    <property type="gene ID" value="WBGene00006919"/>
</dbReference>
<dbReference type="GeneID" id="172216"/>
<dbReference type="KEGG" id="cel:CELE_F46F11.5"/>
<dbReference type="UCSC" id="F46F11.5.1">
    <property type="organism name" value="c. elegans"/>
</dbReference>
<dbReference type="AGR" id="WB:WBGene00006919"/>
<dbReference type="CTD" id="172216"/>
<dbReference type="WormBase" id="F46F11.5">
    <property type="protein sequence ID" value="CE10604"/>
    <property type="gene ID" value="WBGene00006919"/>
    <property type="gene designation" value="vha-10"/>
</dbReference>
<dbReference type="eggNOG" id="KOG1772">
    <property type="taxonomic scope" value="Eukaryota"/>
</dbReference>
<dbReference type="GeneTree" id="ENSGT00940000161280"/>
<dbReference type="HOGENOM" id="CLU_125101_1_1_1"/>
<dbReference type="InParanoid" id="P91303"/>
<dbReference type="OMA" id="ARKYRQD"/>
<dbReference type="OrthoDB" id="250802at2759"/>
<dbReference type="PhylomeDB" id="P91303"/>
<dbReference type="Reactome" id="R-CEL-1222556">
    <property type="pathway name" value="ROS and RNS production in phagocytes"/>
</dbReference>
<dbReference type="Reactome" id="R-CEL-77387">
    <property type="pathway name" value="Insulin receptor recycling"/>
</dbReference>
<dbReference type="Reactome" id="R-CEL-917977">
    <property type="pathway name" value="Transferrin endocytosis and recycling"/>
</dbReference>
<dbReference type="Reactome" id="R-CEL-9639288">
    <property type="pathway name" value="Amino acids regulate mTORC1"/>
</dbReference>
<dbReference type="Reactome" id="R-CEL-983712">
    <property type="pathway name" value="Ion channel transport"/>
</dbReference>
<dbReference type="PRO" id="PR:P91303"/>
<dbReference type="Proteomes" id="UP000001940">
    <property type="component" value="Chromosome I"/>
</dbReference>
<dbReference type="Bgee" id="WBGene00006919">
    <property type="expression patterns" value="Expressed in larva and 4 other cell types or tissues"/>
</dbReference>
<dbReference type="GO" id="GO:0098793">
    <property type="term" value="C:presynapse"/>
    <property type="evidence" value="ECO:0007669"/>
    <property type="project" value="GOC"/>
</dbReference>
<dbReference type="GO" id="GO:0016471">
    <property type="term" value="C:vacuolar proton-transporting V-type ATPase complex"/>
    <property type="evidence" value="ECO:0000303"/>
    <property type="project" value="UniProtKB"/>
</dbReference>
<dbReference type="GO" id="GO:0000221">
    <property type="term" value="C:vacuolar proton-transporting V-type ATPase, V1 domain"/>
    <property type="evidence" value="ECO:0000318"/>
    <property type="project" value="GO_Central"/>
</dbReference>
<dbReference type="GO" id="GO:0016887">
    <property type="term" value="F:ATP hydrolysis activity"/>
    <property type="evidence" value="ECO:0000318"/>
    <property type="project" value="GO_Central"/>
</dbReference>
<dbReference type="GO" id="GO:0015078">
    <property type="term" value="F:proton transmembrane transporter activity"/>
    <property type="evidence" value="ECO:0000303"/>
    <property type="project" value="UniProtKB"/>
</dbReference>
<dbReference type="GO" id="GO:0046961">
    <property type="term" value="F:proton-transporting ATPase activity, rotational mechanism"/>
    <property type="evidence" value="ECO:0000318"/>
    <property type="project" value="GO_Central"/>
</dbReference>
<dbReference type="GO" id="GO:0006754">
    <property type="term" value="P:ATP biosynthetic process"/>
    <property type="evidence" value="ECO:0000303"/>
    <property type="project" value="UniProtKB"/>
</dbReference>
<dbReference type="GO" id="GO:0043068">
    <property type="term" value="P:positive regulation of programmed cell death"/>
    <property type="evidence" value="ECO:0000316"/>
    <property type="project" value="WormBase"/>
</dbReference>
<dbReference type="GO" id="GO:0012501">
    <property type="term" value="P:programmed cell death"/>
    <property type="evidence" value="ECO:0000315"/>
    <property type="project" value="UniProtKB"/>
</dbReference>
<dbReference type="GO" id="GO:1902600">
    <property type="term" value="P:proton transmembrane transport"/>
    <property type="evidence" value="ECO:0000303"/>
    <property type="project" value="UniProtKB"/>
</dbReference>
<dbReference type="GO" id="GO:0097401">
    <property type="term" value="P:synaptic vesicle lumen acidification"/>
    <property type="evidence" value="ECO:0000318"/>
    <property type="project" value="GO_Central"/>
</dbReference>
<dbReference type="FunFam" id="1.20.5.2950:FF:000001">
    <property type="entry name" value="V-type proton ATPase subunit G"/>
    <property type="match status" value="1"/>
</dbReference>
<dbReference type="FunFam" id="1.20.5.620:FF:000004">
    <property type="entry name" value="V-type proton ATPase subunit G"/>
    <property type="match status" value="1"/>
</dbReference>
<dbReference type="Gene3D" id="1.20.5.2950">
    <property type="match status" value="1"/>
</dbReference>
<dbReference type="InterPro" id="IPR005124">
    <property type="entry name" value="V-ATPase_G"/>
</dbReference>
<dbReference type="NCBIfam" id="TIGR01147">
    <property type="entry name" value="V_ATP_synt_G"/>
    <property type="match status" value="1"/>
</dbReference>
<dbReference type="PANTHER" id="PTHR12713:SF11">
    <property type="entry name" value="V-TYPE PROTON ATPASE SUBUNIT G"/>
    <property type="match status" value="1"/>
</dbReference>
<dbReference type="PANTHER" id="PTHR12713">
    <property type="entry name" value="VACUOLAR ATP SYNTHASE SUBUNIT G"/>
    <property type="match status" value="1"/>
</dbReference>
<dbReference type="Pfam" id="PF03179">
    <property type="entry name" value="V-ATPase_G"/>
    <property type="match status" value="1"/>
</dbReference>
<name>VATG_CAEEL</name>
<sequence>MASQTQGIQQLLAAEKRAAEKINEARKRKLQRTKQAKQEAQAEVEKYKQQREAEFKAFEQQYLGTKEDIESKIRRDTEDQISGMKQSVAGNKQAVIVRLLQLVCDIKPELHHNLTLQKKLHGQFAA</sequence>
<evidence type="ECO:0000250" key="1">
    <source>
        <dbReference type="UniProtKB" id="Q0VCV6"/>
    </source>
</evidence>
<evidence type="ECO:0000269" key="2">
    <source>
    </source>
</evidence>
<evidence type="ECO:0000269" key="3">
    <source>
    </source>
</evidence>
<evidence type="ECO:0000305" key="4"/>
<evidence type="ECO:0000312" key="5">
    <source>
        <dbReference type="WormBase" id="F46F11.5"/>
    </source>
</evidence>
<proteinExistence type="evidence at protein level"/>
<accession>P91303</accession>
<feature type="chain" id="PRO_0000192905" description="Probable V-type proton ATPase subunit G">
    <location>
        <begin position="1"/>
        <end position="126"/>
    </location>
</feature>
<keyword id="KW-0375">Hydrogen ion transport</keyword>
<keyword id="KW-0406">Ion transport</keyword>
<keyword id="KW-1185">Reference proteome</keyword>
<keyword id="KW-0813">Transport</keyword>